<accession>Q8XJJ7</accession>
<comment type="function">
    <text evidence="1">Negatively regulates transcription of bacterial ribonucleotide reductase nrd genes and operons by binding to NrdR-boxes.</text>
</comment>
<comment type="cofactor">
    <cofactor evidence="1">
        <name>Zn(2+)</name>
        <dbReference type="ChEBI" id="CHEBI:29105"/>
    </cofactor>
    <text evidence="1">Binds 1 zinc ion.</text>
</comment>
<comment type="similarity">
    <text evidence="1">Belongs to the NrdR family.</text>
</comment>
<protein>
    <recommendedName>
        <fullName evidence="1">Transcriptional repressor NrdR</fullName>
    </recommendedName>
</protein>
<name>NRDR_CLOPE</name>
<organism>
    <name type="scientific">Clostridium perfringens (strain 13 / Type A)</name>
    <dbReference type="NCBI Taxonomy" id="195102"/>
    <lineage>
        <taxon>Bacteria</taxon>
        <taxon>Bacillati</taxon>
        <taxon>Bacillota</taxon>
        <taxon>Clostridia</taxon>
        <taxon>Eubacteriales</taxon>
        <taxon>Clostridiaceae</taxon>
        <taxon>Clostridium</taxon>
    </lineage>
</organism>
<gene>
    <name evidence="1" type="primary">nrdR</name>
    <name type="ordered locus">CPE1759</name>
</gene>
<evidence type="ECO:0000255" key="1">
    <source>
        <dbReference type="HAMAP-Rule" id="MF_00440"/>
    </source>
</evidence>
<reference key="1">
    <citation type="journal article" date="2002" name="Proc. Natl. Acad. Sci. U.S.A.">
        <title>Complete genome sequence of Clostridium perfringens, an anaerobic flesh-eater.</title>
        <authorList>
            <person name="Shimizu T."/>
            <person name="Ohtani K."/>
            <person name="Hirakawa H."/>
            <person name="Ohshima K."/>
            <person name="Yamashita A."/>
            <person name="Shiba T."/>
            <person name="Ogasawara N."/>
            <person name="Hattori M."/>
            <person name="Kuhara S."/>
            <person name="Hayashi H."/>
        </authorList>
    </citation>
    <scope>NUCLEOTIDE SEQUENCE [LARGE SCALE GENOMIC DNA]</scope>
    <source>
        <strain>13 / Type A</strain>
    </source>
</reference>
<sequence length="149" mass="17718">MRCPYCSYEESKVVDSRSAEDYNAIRRRRECLRCSKRYTTYEKVEDIPILVIKKDLSRESFNKEKIISGLIKACQKRPVSRAQIEEIAADIERNISNKMMVEIKSDYIGEMIMERLKDIDEVSYVRFASVYRQFKDINTFMEEIKSLMK</sequence>
<proteinExistence type="inferred from homology"/>
<dbReference type="EMBL" id="BA000016">
    <property type="protein sequence ID" value="BAB81465.1"/>
    <property type="molecule type" value="Genomic_DNA"/>
</dbReference>
<dbReference type="RefSeq" id="WP_003449440.1">
    <property type="nucleotide sequence ID" value="NC_003366.1"/>
</dbReference>
<dbReference type="SMR" id="Q8XJJ7"/>
<dbReference type="STRING" id="195102.gene:10491023"/>
<dbReference type="GeneID" id="93001704"/>
<dbReference type="KEGG" id="cpe:CPE1759"/>
<dbReference type="HOGENOM" id="CLU_108412_0_0_9"/>
<dbReference type="Proteomes" id="UP000000818">
    <property type="component" value="Chromosome"/>
</dbReference>
<dbReference type="GO" id="GO:0005524">
    <property type="term" value="F:ATP binding"/>
    <property type="evidence" value="ECO:0007669"/>
    <property type="project" value="UniProtKB-KW"/>
</dbReference>
<dbReference type="GO" id="GO:0003677">
    <property type="term" value="F:DNA binding"/>
    <property type="evidence" value="ECO:0007669"/>
    <property type="project" value="UniProtKB-KW"/>
</dbReference>
<dbReference type="GO" id="GO:0008270">
    <property type="term" value="F:zinc ion binding"/>
    <property type="evidence" value="ECO:0007669"/>
    <property type="project" value="UniProtKB-UniRule"/>
</dbReference>
<dbReference type="GO" id="GO:0045892">
    <property type="term" value="P:negative regulation of DNA-templated transcription"/>
    <property type="evidence" value="ECO:0007669"/>
    <property type="project" value="UniProtKB-UniRule"/>
</dbReference>
<dbReference type="HAMAP" id="MF_00440">
    <property type="entry name" value="NrdR"/>
    <property type="match status" value="1"/>
</dbReference>
<dbReference type="InterPro" id="IPR005144">
    <property type="entry name" value="ATP-cone_dom"/>
</dbReference>
<dbReference type="InterPro" id="IPR055173">
    <property type="entry name" value="NrdR-like_N"/>
</dbReference>
<dbReference type="InterPro" id="IPR003796">
    <property type="entry name" value="RNR_NrdR-like"/>
</dbReference>
<dbReference type="NCBIfam" id="TIGR00244">
    <property type="entry name" value="transcriptional regulator NrdR"/>
    <property type="match status" value="1"/>
</dbReference>
<dbReference type="PANTHER" id="PTHR30455">
    <property type="entry name" value="TRANSCRIPTIONAL REPRESSOR NRDR"/>
    <property type="match status" value="1"/>
</dbReference>
<dbReference type="PANTHER" id="PTHR30455:SF2">
    <property type="entry name" value="TRANSCRIPTIONAL REPRESSOR NRDR"/>
    <property type="match status" value="1"/>
</dbReference>
<dbReference type="Pfam" id="PF03477">
    <property type="entry name" value="ATP-cone"/>
    <property type="match status" value="1"/>
</dbReference>
<dbReference type="Pfam" id="PF22811">
    <property type="entry name" value="Zn_ribbon_NrdR"/>
    <property type="match status" value="1"/>
</dbReference>
<dbReference type="PROSITE" id="PS51161">
    <property type="entry name" value="ATP_CONE"/>
    <property type="match status" value="1"/>
</dbReference>
<keyword id="KW-0067">ATP-binding</keyword>
<keyword id="KW-0238">DNA-binding</keyword>
<keyword id="KW-0479">Metal-binding</keyword>
<keyword id="KW-0547">Nucleotide-binding</keyword>
<keyword id="KW-1185">Reference proteome</keyword>
<keyword id="KW-0678">Repressor</keyword>
<keyword id="KW-0804">Transcription</keyword>
<keyword id="KW-0805">Transcription regulation</keyword>
<keyword id="KW-0862">Zinc</keyword>
<keyword id="KW-0863">Zinc-finger</keyword>
<feature type="chain" id="PRO_0000182286" description="Transcriptional repressor NrdR">
    <location>
        <begin position="1"/>
        <end position="149"/>
    </location>
</feature>
<feature type="domain" description="ATP-cone" evidence="1">
    <location>
        <begin position="49"/>
        <end position="139"/>
    </location>
</feature>
<feature type="zinc finger region" evidence="1">
    <location>
        <begin position="3"/>
        <end position="34"/>
    </location>
</feature>